<organism>
    <name type="scientific">Bacillus caldolyticus</name>
    <dbReference type="NCBI Taxonomy" id="1394"/>
    <lineage>
        <taxon>Bacteria</taxon>
        <taxon>Bacillati</taxon>
        <taxon>Bacillota</taxon>
        <taxon>Bacilli</taxon>
        <taxon>Bacillales</taxon>
        <taxon>Anoxybacillaceae</taxon>
        <taxon>Geobacillus</taxon>
        <taxon>Geobacillus thermoleovorans group</taxon>
    </lineage>
</organism>
<comment type="function">
    <text>Extracellular zinc metalloprotease.</text>
</comment>
<comment type="catalytic activity">
    <reaction>
        <text>Preferential cleavage: Xaa-|-Leu &gt; Xaa-|-Phe.</text>
        <dbReference type="EC" id="3.4.24.27"/>
    </reaction>
</comment>
<comment type="cofactor">
    <cofactor>
        <name>Ca(2+)</name>
        <dbReference type="ChEBI" id="CHEBI:29108"/>
    </cofactor>
    <text>Binds 4 Ca(2+) ions per subunit.</text>
</comment>
<comment type="cofactor">
    <cofactor>
        <name>Zn(2+)</name>
        <dbReference type="ChEBI" id="CHEBI:29105"/>
    </cofactor>
    <text>Binds 1 zinc ion per subunit.</text>
</comment>
<comment type="biophysicochemical properties">
    <temperatureDependence>
        <text>Thermostable.</text>
    </temperatureDependence>
</comment>
<comment type="subcellular location">
    <subcellularLocation>
        <location>Secreted</location>
    </subcellularLocation>
</comment>
<comment type="similarity">
    <text evidence="4">Belongs to the peptidase M4 family.</text>
</comment>
<evidence type="ECO:0000250" key="1"/>
<evidence type="ECO:0000255" key="2"/>
<evidence type="ECO:0000255" key="3">
    <source>
        <dbReference type="PROSITE-ProRule" id="PRU10095"/>
    </source>
</evidence>
<evidence type="ECO:0000305" key="4"/>
<gene>
    <name type="primary">npr</name>
</gene>
<dbReference type="EC" id="3.4.24.27"/>
<dbReference type="EMBL" id="U25629">
    <property type="protein sequence ID" value="AAB18652.1"/>
    <property type="molecule type" value="Genomic_DNA"/>
</dbReference>
<dbReference type="PIR" id="S72176">
    <property type="entry name" value="S72176"/>
</dbReference>
<dbReference type="SMR" id="Q59193"/>
<dbReference type="MEROPS" id="M04.018"/>
<dbReference type="GO" id="GO:0005576">
    <property type="term" value="C:extracellular region"/>
    <property type="evidence" value="ECO:0007669"/>
    <property type="project" value="UniProtKB-SubCell"/>
</dbReference>
<dbReference type="GO" id="GO:0046872">
    <property type="term" value="F:metal ion binding"/>
    <property type="evidence" value="ECO:0007669"/>
    <property type="project" value="UniProtKB-KW"/>
</dbReference>
<dbReference type="GO" id="GO:0004222">
    <property type="term" value="F:metalloendopeptidase activity"/>
    <property type="evidence" value="ECO:0007669"/>
    <property type="project" value="InterPro"/>
</dbReference>
<dbReference type="GO" id="GO:0006508">
    <property type="term" value="P:proteolysis"/>
    <property type="evidence" value="ECO:0007669"/>
    <property type="project" value="UniProtKB-KW"/>
</dbReference>
<dbReference type="CDD" id="cd09597">
    <property type="entry name" value="M4_TLP"/>
    <property type="match status" value="1"/>
</dbReference>
<dbReference type="FunFam" id="1.10.390.10:FF:000012">
    <property type="entry name" value="Thermolysin"/>
    <property type="match status" value="1"/>
</dbReference>
<dbReference type="Gene3D" id="3.10.170.10">
    <property type="match status" value="1"/>
</dbReference>
<dbReference type="Gene3D" id="3.10.450.40">
    <property type="match status" value="1"/>
</dbReference>
<dbReference type="Gene3D" id="3.10.450.490">
    <property type="match status" value="1"/>
</dbReference>
<dbReference type="Gene3D" id="1.10.390.10">
    <property type="entry name" value="Neutral Protease Domain 2"/>
    <property type="match status" value="1"/>
</dbReference>
<dbReference type="InterPro" id="IPR011096">
    <property type="entry name" value="FTP_domain"/>
</dbReference>
<dbReference type="InterPro" id="IPR025711">
    <property type="entry name" value="PepSY"/>
</dbReference>
<dbReference type="InterPro" id="IPR023612">
    <property type="entry name" value="Peptidase_M4"/>
</dbReference>
<dbReference type="InterPro" id="IPR027268">
    <property type="entry name" value="Peptidase_M4/M1_CTD_sf"/>
</dbReference>
<dbReference type="InterPro" id="IPR001570">
    <property type="entry name" value="Peptidase_M4_C_domain"/>
</dbReference>
<dbReference type="InterPro" id="IPR013856">
    <property type="entry name" value="Peptidase_M4_domain"/>
</dbReference>
<dbReference type="InterPro" id="IPR050728">
    <property type="entry name" value="Zinc_Metalloprotease_M4"/>
</dbReference>
<dbReference type="PANTHER" id="PTHR33794">
    <property type="entry name" value="BACILLOLYSIN"/>
    <property type="match status" value="1"/>
</dbReference>
<dbReference type="PANTHER" id="PTHR33794:SF3">
    <property type="entry name" value="NEUTRAL PROTEASE B"/>
    <property type="match status" value="1"/>
</dbReference>
<dbReference type="Pfam" id="PF07504">
    <property type="entry name" value="FTP"/>
    <property type="match status" value="1"/>
</dbReference>
<dbReference type="Pfam" id="PF03413">
    <property type="entry name" value="PepSY"/>
    <property type="match status" value="1"/>
</dbReference>
<dbReference type="Pfam" id="PF01447">
    <property type="entry name" value="Peptidase_M4"/>
    <property type="match status" value="1"/>
</dbReference>
<dbReference type="Pfam" id="PF02868">
    <property type="entry name" value="Peptidase_M4_C"/>
    <property type="match status" value="1"/>
</dbReference>
<dbReference type="PRINTS" id="PR00730">
    <property type="entry name" value="THERMOLYSIN"/>
</dbReference>
<dbReference type="SUPFAM" id="SSF55486">
    <property type="entry name" value="Metalloproteases ('zincins'), catalytic domain"/>
    <property type="match status" value="1"/>
</dbReference>
<dbReference type="PROSITE" id="PS00142">
    <property type="entry name" value="ZINC_PROTEASE"/>
    <property type="match status" value="1"/>
</dbReference>
<sequence>MDKRAMLGAIGLAFGLMAWPFGASAKEKSMVWNEQWKTPSFVSGSLLKGEDAPEELVYRYLDQEKNTFQLGGQARERLSLIGKQTDELGHTVMRFEQRYRGIPVYGAVLVAHVNDGELSSLSGTLIPNLDKRTLKTEAAISIQQAEMIAKQDVADAVTKERPAAEEGKPTRLVIYPDGETPRLAYEVNVRFLTPVPGNWIYMIDAADGKVLNKWNQMDEAKPGGGQPVAGTSTVGVGRGVLGDQKYINTTYSSYYGYYYLQDNTRGSGIFTYDGRNRTVLPGSLWADGDNQFFASYDAAAVDAHYYAGVVYDYYKNVHGRLSYDGSNAAIRSTVHYGRGYNNAFWNGSQMVYGDGDGQTFLPFSGGIDVVGHELTHAVTDYTAGLVYQNESGAINEAMSDIFGTLVEFYANRNPDWEIGEDIYTPGIAGDALRSMSDPAKYGDPDHYSKRYTGTQDNGGVHTNSGIINKAAYLLSQGGVHYGVSVTGIGRDKMGKIFYRALVYYLTPTSNFSQLRAACVQAAADLYGSTSQEVNSVKQAFNAVGVY</sequence>
<reference key="1">
    <citation type="journal article" date="1996" name="Biochim. Biophys. Acta">
        <title>Sequence of the gene encoding a highly thermostable neutral proteinase from Bacillus sp. strain EA1: expression in Escherichia coli and characterisation.</title>
        <authorList>
            <person name="Saul D.J."/>
            <person name="Williams L.C."/>
            <person name="Toogood H.S."/>
            <person name="Daniel R.M."/>
            <person name="Bergquist P.L."/>
        </authorList>
    </citation>
    <scope>NUCLEOTIDE SEQUENCE [GENOMIC DNA]</scope>
    <source>
        <strain>DSM 405 / NBRC 15313 / YP-T</strain>
    </source>
</reference>
<name>THER_BACCL</name>
<proteinExistence type="evidence at protein level"/>
<protein>
    <recommendedName>
        <fullName>Thermolysin</fullName>
        <ecNumber>3.4.24.27</ecNumber>
    </recommendedName>
    <alternativeName>
        <fullName>Thermostable neutral proteinase</fullName>
    </alternativeName>
</protein>
<feature type="signal peptide" evidence="2">
    <location>
        <begin position="1"/>
        <end position="25"/>
    </location>
</feature>
<feature type="propeptide" id="PRO_0000028586" description="Activation peptide">
    <location>
        <begin position="26"/>
        <end position="228"/>
    </location>
</feature>
<feature type="chain" id="PRO_0000028587" description="Thermolysin">
    <location>
        <begin position="229"/>
        <end position="546"/>
    </location>
</feature>
<feature type="active site" evidence="3">
    <location>
        <position position="373"/>
    </location>
</feature>
<feature type="active site" description="Proton donor" evidence="3">
    <location>
        <position position="461"/>
    </location>
</feature>
<feature type="binding site" evidence="1">
    <location>
        <position position="287"/>
    </location>
    <ligand>
        <name>Ca(2+)</name>
        <dbReference type="ChEBI" id="CHEBI:29108"/>
        <label>1</label>
    </ligand>
</feature>
<feature type="binding site" evidence="1">
    <location>
        <position position="289"/>
    </location>
    <ligand>
        <name>Ca(2+)</name>
        <dbReference type="ChEBI" id="CHEBI:29108"/>
        <label>1</label>
    </ligand>
</feature>
<feature type="binding site" evidence="1">
    <location>
        <position position="291"/>
    </location>
    <ligand>
        <name>Ca(2+)</name>
        <dbReference type="ChEBI" id="CHEBI:29108"/>
        <label>1</label>
    </ligand>
</feature>
<feature type="binding site" evidence="1">
    <location>
        <position position="368"/>
    </location>
    <ligand>
        <name>Ca(2+)</name>
        <dbReference type="ChEBI" id="CHEBI:29108"/>
        <label>2</label>
    </ligand>
</feature>
<feature type="binding site" evidence="3">
    <location>
        <position position="372"/>
    </location>
    <ligand>
        <name>Zn(2+)</name>
        <dbReference type="ChEBI" id="CHEBI:29105"/>
        <note>catalytic</note>
    </ligand>
</feature>
<feature type="binding site" evidence="3">
    <location>
        <position position="376"/>
    </location>
    <ligand>
        <name>Zn(2+)</name>
        <dbReference type="ChEBI" id="CHEBI:29105"/>
        <note>catalytic</note>
    </ligand>
</feature>
<feature type="binding site" evidence="3">
    <location>
        <position position="396"/>
    </location>
    <ligand>
        <name>Zn(2+)</name>
        <dbReference type="ChEBI" id="CHEBI:29105"/>
        <note>catalytic</note>
    </ligand>
</feature>
<feature type="binding site" evidence="1">
    <location>
        <position position="413"/>
    </location>
    <ligand>
        <name>Ca(2+)</name>
        <dbReference type="ChEBI" id="CHEBI:29108"/>
        <label>3</label>
    </ligand>
</feature>
<feature type="binding site" evidence="1">
    <location>
        <position position="415"/>
    </location>
    <ligand>
        <name>Ca(2+)</name>
        <dbReference type="ChEBI" id="CHEBI:29108"/>
        <label>2</label>
    </ligand>
</feature>
<feature type="binding site" evidence="1">
    <location>
        <position position="415"/>
    </location>
    <ligand>
        <name>Ca(2+)</name>
        <dbReference type="ChEBI" id="CHEBI:29108"/>
        <label>3</label>
    </ligand>
</feature>
<feature type="binding site" evidence="1">
    <location>
        <position position="417"/>
    </location>
    <ligand>
        <name>Ca(2+)</name>
        <dbReference type="ChEBI" id="CHEBI:29108"/>
        <label>2</label>
    </ligand>
</feature>
<feature type="binding site" evidence="1">
    <location>
        <position position="420"/>
    </location>
    <ligand>
        <name>Ca(2+)</name>
        <dbReference type="ChEBI" id="CHEBI:29108"/>
        <label>2</label>
    </ligand>
</feature>
<feature type="binding site" evidence="1">
    <location>
        <position position="420"/>
    </location>
    <ligand>
        <name>Ca(2+)</name>
        <dbReference type="ChEBI" id="CHEBI:29108"/>
        <label>3</label>
    </ligand>
</feature>
<feature type="binding site" evidence="1">
    <location>
        <position position="423"/>
    </location>
    <ligand>
        <name>Ca(2+)</name>
        <dbReference type="ChEBI" id="CHEBI:29108"/>
        <label>4</label>
    </ligand>
</feature>
<feature type="binding site" evidence="1">
    <location>
        <position position="424"/>
    </location>
    <ligand>
        <name>Ca(2+)</name>
        <dbReference type="ChEBI" id="CHEBI:29108"/>
        <label>4</label>
    </ligand>
</feature>
<feature type="binding site" evidence="1">
    <location>
        <position position="427"/>
    </location>
    <ligand>
        <name>Ca(2+)</name>
        <dbReference type="ChEBI" id="CHEBI:29108"/>
        <label>4</label>
    </ligand>
</feature>
<feature type="binding site" evidence="1">
    <location>
        <position position="430"/>
    </location>
    <ligand>
        <name>Ca(2+)</name>
        <dbReference type="ChEBI" id="CHEBI:29108"/>
        <label>4</label>
    </ligand>
</feature>
<accession>Q59193</accession>
<keyword id="KW-0106">Calcium</keyword>
<keyword id="KW-0378">Hydrolase</keyword>
<keyword id="KW-0479">Metal-binding</keyword>
<keyword id="KW-0482">Metalloprotease</keyword>
<keyword id="KW-0645">Protease</keyword>
<keyword id="KW-0964">Secreted</keyword>
<keyword id="KW-0732">Signal</keyword>
<keyword id="KW-0862">Zinc</keyword>
<keyword id="KW-0865">Zymogen</keyword>